<proteinExistence type="evidence at transcript level"/>
<organism>
    <name type="scientific">Oryza sativa subsp. japonica</name>
    <name type="common">Rice</name>
    <dbReference type="NCBI Taxonomy" id="39947"/>
    <lineage>
        <taxon>Eukaryota</taxon>
        <taxon>Viridiplantae</taxon>
        <taxon>Streptophyta</taxon>
        <taxon>Embryophyta</taxon>
        <taxon>Tracheophyta</taxon>
        <taxon>Spermatophyta</taxon>
        <taxon>Magnoliopsida</taxon>
        <taxon>Liliopsida</taxon>
        <taxon>Poales</taxon>
        <taxon>Poaceae</taxon>
        <taxon>BOP clade</taxon>
        <taxon>Oryzoideae</taxon>
        <taxon>Oryzeae</taxon>
        <taxon>Oryzinae</taxon>
        <taxon>Oryza</taxon>
        <taxon>Oryza sativa</taxon>
    </lineage>
</organism>
<keyword id="KW-0131">Cell cycle</keyword>
<keyword id="KW-0132">Cell division</keyword>
<keyword id="KW-0195">Cyclin</keyword>
<keyword id="KW-1185">Reference proteome</keyword>
<accession>Q2QN26</accession>
<accession>A0A0P0YC97</accession>
<sequence length="385" mass="42221">MADKENSTPASAARLTRSSAAAGAQAKRSAAAGVADGGAPPAKRKRVALSDLPTLSNAVVVAPRQPHHPVVIKPSSKQPEPAAEAAAPSGGGGGSPVSSASTSTASPSSGWDPQYASDIYTYLRSMEVEARRQSAADYIEAVQVDVTANMRAILVDWLVEVADEYKLVADTLYLAVSYLDRYLSAHPLRRNRLQLLGVGAMLIAAKYEEISPPHVEDFCYITDNTYTRQEVVKMESDILKLLEFEMGNPTIKTFLRRFTRSCQEDKKRSSLLLEFMGSYLAELSLLDYGCLRFLPSVVAASVVFVAKLNIDPYTNPWSKKMQKLTGYKVSELKDCILAIHDLQLRKKCSNLTAIRDKYKQHKFKCVSTLLPPVDIPASYLQDLTE</sequence>
<feature type="chain" id="PRO_0000287003" description="Cyclin-A3-2">
    <location>
        <begin position="1"/>
        <end position="385"/>
    </location>
</feature>
<feature type="region of interest" description="Disordered" evidence="1">
    <location>
        <begin position="1"/>
        <end position="110"/>
    </location>
</feature>
<feature type="compositionally biased region" description="Low complexity" evidence="1">
    <location>
        <begin position="7"/>
        <end position="41"/>
    </location>
</feature>
<feature type="compositionally biased region" description="Low complexity" evidence="1">
    <location>
        <begin position="74"/>
        <end position="88"/>
    </location>
</feature>
<feature type="compositionally biased region" description="Low complexity" evidence="1">
    <location>
        <begin position="96"/>
        <end position="110"/>
    </location>
</feature>
<reference key="1">
    <citation type="journal article" date="2005" name="BMC Biol.">
        <title>The sequence of rice chromosomes 11 and 12, rich in disease resistance genes and recent gene duplications.</title>
        <authorList>
            <consortium name="The rice chromosomes 11 and 12 sequencing consortia"/>
        </authorList>
    </citation>
    <scope>NUCLEOTIDE SEQUENCE [LARGE SCALE GENOMIC DNA]</scope>
    <source>
        <strain>cv. Nipponbare</strain>
    </source>
</reference>
<reference key="2">
    <citation type="journal article" date="2005" name="Nature">
        <title>The map-based sequence of the rice genome.</title>
        <authorList>
            <consortium name="International rice genome sequencing project (IRGSP)"/>
        </authorList>
    </citation>
    <scope>NUCLEOTIDE SEQUENCE [LARGE SCALE GENOMIC DNA]</scope>
    <source>
        <strain>cv. Nipponbare</strain>
    </source>
</reference>
<reference key="3">
    <citation type="journal article" date="2008" name="Nucleic Acids Res.">
        <title>The rice annotation project database (RAP-DB): 2008 update.</title>
        <authorList>
            <consortium name="The rice annotation project (RAP)"/>
        </authorList>
    </citation>
    <scope>GENOME REANNOTATION</scope>
    <source>
        <strain>cv. Nipponbare</strain>
    </source>
</reference>
<reference key="4">
    <citation type="journal article" date="2013" name="Rice">
        <title>Improvement of the Oryza sativa Nipponbare reference genome using next generation sequence and optical map data.</title>
        <authorList>
            <person name="Kawahara Y."/>
            <person name="de la Bastide M."/>
            <person name="Hamilton J.P."/>
            <person name="Kanamori H."/>
            <person name="McCombie W.R."/>
            <person name="Ouyang S."/>
            <person name="Schwartz D.C."/>
            <person name="Tanaka T."/>
            <person name="Wu J."/>
            <person name="Zhou S."/>
            <person name="Childs K.L."/>
            <person name="Davidson R.M."/>
            <person name="Lin H."/>
            <person name="Quesada-Ocampo L."/>
            <person name="Vaillancourt B."/>
            <person name="Sakai H."/>
            <person name="Lee S.S."/>
            <person name="Kim J."/>
            <person name="Numa H."/>
            <person name="Itoh T."/>
            <person name="Buell C.R."/>
            <person name="Matsumoto T."/>
        </authorList>
    </citation>
    <scope>GENOME REANNOTATION</scope>
    <source>
        <strain>cv. Nipponbare</strain>
    </source>
</reference>
<reference key="5">
    <citation type="journal article" date="2005" name="PLoS Biol.">
        <title>The genomes of Oryza sativa: a history of duplications.</title>
        <authorList>
            <person name="Yu J."/>
            <person name="Wang J."/>
            <person name="Lin W."/>
            <person name="Li S."/>
            <person name="Li H."/>
            <person name="Zhou J."/>
            <person name="Ni P."/>
            <person name="Dong W."/>
            <person name="Hu S."/>
            <person name="Zeng C."/>
            <person name="Zhang J."/>
            <person name="Zhang Y."/>
            <person name="Li R."/>
            <person name="Xu Z."/>
            <person name="Li S."/>
            <person name="Li X."/>
            <person name="Zheng H."/>
            <person name="Cong L."/>
            <person name="Lin L."/>
            <person name="Yin J."/>
            <person name="Geng J."/>
            <person name="Li G."/>
            <person name="Shi J."/>
            <person name="Liu J."/>
            <person name="Lv H."/>
            <person name="Li J."/>
            <person name="Wang J."/>
            <person name="Deng Y."/>
            <person name="Ran L."/>
            <person name="Shi X."/>
            <person name="Wang X."/>
            <person name="Wu Q."/>
            <person name="Li C."/>
            <person name="Ren X."/>
            <person name="Wang J."/>
            <person name="Wang X."/>
            <person name="Li D."/>
            <person name="Liu D."/>
            <person name="Zhang X."/>
            <person name="Ji Z."/>
            <person name="Zhao W."/>
            <person name="Sun Y."/>
            <person name="Zhang Z."/>
            <person name="Bao J."/>
            <person name="Han Y."/>
            <person name="Dong L."/>
            <person name="Ji J."/>
            <person name="Chen P."/>
            <person name="Wu S."/>
            <person name="Liu J."/>
            <person name="Xiao Y."/>
            <person name="Bu D."/>
            <person name="Tan J."/>
            <person name="Yang L."/>
            <person name="Ye C."/>
            <person name="Zhang J."/>
            <person name="Xu J."/>
            <person name="Zhou Y."/>
            <person name="Yu Y."/>
            <person name="Zhang B."/>
            <person name="Zhuang S."/>
            <person name="Wei H."/>
            <person name="Liu B."/>
            <person name="Lei M."/>
            <person name="Yu H."/>
            <person name="Li Y."/>
            <person name="Xu H."/>
            <person name="Wei S."/>
            <person name="He X."/>
            <person name="Fang L."/>
            <person name="Zhang Z."/>
            <person name="Zhang Y."/>
            <person name="Huang X."/>
            <person name="Su Z."/>
            <person name="Tong W."/>
            <person name="Li J."/>
            <person name="Tong Z."/>
            <person name="Li S."/>
            <person name="Ye J."/>
            <person name="Wang L."/>
            <person name="Fang L."/>
            <person name="Lei T."/>
            <person name="Chen C.-S."/>
            <person name="Chen H.-C."/>
            <person name="Xu Z."/>
            <person name="Li H."/>
            <person name="Huang H."/>
            <person name="Zhang F."/>
            <person name="Xu H."/>
            <person name="Li N."/>
            <person name="Zhao C."/>
            <person name="Li S."/>
            <person name="Dong L."/>
            <person name="Huang Y."/>
            <person name="Li L."/>
            <person name="Xi Y."/>
            <person name="Qi Q."/>
            <person name="Li W."/>
            <person name="Zhang B."/>
            <person name="Hu W."/>
            <person name="Zhang Y."/>
            <person name="Tian X."/>
            <person name="Jiao Y."/>
            <person name="Liang X."/>
            <person name="Jin J."/>
            <person name="Gao L."/>
            <person name="Zheng W."/>
            <person name="Hao B."/>
            <person name="Liu S.-M."/>
            <person name="Wang W."/>
            <person name="Yuan L."/>
            <person name="Cao M."/>
            <person name="McDermott J."/>
            <person name="Samudrala R."/>
            <person name="Wang J."/>
            <person name="Wong G.K.-S."/>
            <person name="Yang H."/>
        </authorList>
    </citation>
    <scope>NUCLEOTIDE SEQUENCE [LARGE SCALE GENOMIC DNA]</scope>
    <source>
        <strain>cv. Nipponbare</strain>
    </source>
</reference>
<reference key="6">
    <citation type="journal article" date="2003" name="Science">
        <title>Collection, mapping, and annotation of over 28,000 cDNA clones from japonica rice.</title>
        <authorList>
            <consortium name="The rice full-length cDNA consortium"/>
        </authorList>
    </citation>
    <scope>NUCLEOTIDE SEQUENCE [LARGE SCALE MRNA]</scope>
    <source>
        <strain>cv. Nipponbare</strain>
    </source>
</reference>
<reference key="7">
    <citation type="journal article" date="2006" name="Mol. Genet. Genomics">
        <title>Genome-wide analysis of cyclin family in rice (Oryza sativa L.).</title>
        <authorList>
            <person name="La H."/>
            <person name="Li J."/>
            <person name="Ji Z."/>
            <person name="Cheng Y."/>
            <person name="Li X."/>
            <person name="Jiang S."/>
            <person name="Venkatesh P.N."/>
            <person name="Ramachandran S."/>
        </authorList>
    </citation>
    <scope>GENE FAMILY</scope>
    <scope>NOMENCLATURE</scope>
</reference>
<evidence type="ECO:0000256" key="1">
    <source>
        <dbReference type="SAM" id="MobiDB-lite"/>
    </source>
</evidence>
<evidence type="ECO:0000305" key="2"/>
<protein>
    <recommendedName>
        <fullName>Cyclin-A3-2</fullName>
    </recommendedName>
    <alternativeName>
        <fullName>G2/mitotic-specific cyclin-A3-2</fullName>
        <shortName>CycA3;2</shortName>
    </alternativeName>
</protein>
<gene>
    <name type="primary">CYCA3-2</name>
    <name type="ordered locus">Os12g0581800</name>
    <name type="ordered locus">LOC_Os12g39210</name>
    <name type="ORF">OsJ_035222</name>
</gene>
<comment type="similarity">
    <text evidence="2">Belongs to the cyclin family. Cyclin AB subfamily.</text>
</comment>
<comment type="sequence caution" evidence="2">
    <conflict type="frameshift">
        <sequence resource="EMBL" id="AK110937"/>
    </conflict>
</comment>
<name>CCA32_ORYSJ</name>
<dbReference type="EMBL" id="DP000011">
    <property type="protein sequence ID" value="ABA99137.1"/>
    <property type="molecule type" value="Genomic_DNA"/>
</dbReference>
<dbReference type="EMBL" id="AP008218">
    <property type="protein sequence ID" value="BAF30156.1"/>
    <property type="molecule type" value="Genomic_DNA"/>
</dbReference>
<dbReference type="EMBL" id="AP014968">
    <property type="protein sequence ID" value="BAT17825.1"/>
    <property type="molecule type" value="Genomic_DNA"/>
</dbReference>
<dbReference type="EMBL" id="CM000149">
    <property type="protein sequence ID" value="EAZ21013.1"/>
    <property type="molecule type" value="Genomic_DNA"/>
</dbReference>
<dbReference type="EMBL" id="AK110937">
    <property type="status" value="NOT_ANNOTATED_CDS"/>
    <property type="molecule type" value="mRNA"/>
</dbReference>
<dbReference type="RefSeq" id="XP_015620063.1">
    <property type="nucleotide sequence ID" value="XM_015764577.1"/>
</dbReference>
<dbReference type="SMR" id="Q2QN26"/>
<dbReference type="FunCoup" id="Q2QN26">
    <property type="interactions" value="792"/>
</dbReference>
<dbReference type="STRING" id="39947.Q2QN26"/>
<dbReference type="PaxDb" id="39947-Q2QN26"/>
<dbReference type="EnsemblPlants" id="Os12t0581800-01">
    <property type="protein sequence ID" value="Os12t0581800-01"/>
    <property type="gene ID" value="Os12g0581800"/>
</dbReference>
<dbReference type="Gramene" id="Os12t0581800-01">
    <property type="protein sequence ID" value="Os12t0581800-01"/>
    <property type="gene ID" value="Os12g0581800"/>
</dbReference>
<dbReference type="KEGG" id="dosa:Os12g0581800"/>
<dbReference type="eggNOG" id="KOG0654">
    <property type="taxonomic scope" value="Eukaryota"/>
</dbReference>
<dbReference type="HOGENOM" id="CLU_020695_2_2_1"/>
<dbReference type="InParanoid" id="Q2QN26"/>
<dbReference type="OMA" id="KSGYMQK"/>
<dbReference type="OrthoDB" id="5590282at2759"/>
<dbReference type="Proteomes" id="UP000000763">
    <property type="component" value="Chromosome 12"/>
</dbReference>
<dbReference type="Proteomes" id="UP000007752">
    <property type="component" value="Chromosome 12"/>
</dbReference>
<dbReference type="Proteomes" id="UP000059680">
    <property type="component" value="Chromosome 12"/>
</dbReference>
<dbReference type="GO" id="GO:0000307">
    <property type="term" value="C:cyclin-dependent protein kinase holoenzyme complex"/>
    <property type="evidence" value="ECO:0000318"/>
    <property type="project" value="GO_Central"/>
</dbReference>
<dbReference type="GO" id="GO:0005737">
    <property type="term" value="C:cytoplasm"/>
    <property type="evidence" value="ECO:0000318"/>
    <property type="project" value="GO_Central"/>
</dbReference>
<dbReference type="GO" id="GO:0005634">
    <property type="term" value="C:nucleus"/>
    <property type="evidence" value="ECO:0000318"/>
    <property type="project" value="GO_Central"/>
</dbReference>
<dbReference type="GO" id="GO:0016538">
    <property type="term" value="F:cyclin-dependent protein serine/threonine kinase regulator activity"/>
    <property type="evidence" value="ECO:0000318"/>
    <property type="project" value="GO_Central"/>
</dbReference>
<dbReference type="GO" id="GO:0051301">
    <property type="term" value="P:cell division"/>
    <property type="evidence" value="ECO:0007669"/>
    <property type="project" value="UniProtKB-KW"/>
</dbReference>
<dbReference type="GO" id="GO:0000082">
    <property type="term" value="P:G1/S transition of mitotic cell cycle"/>
    <property type="evidence" value="ECO:0000318"/>
    <property type="project" value="GO_Central"/>
</dbReference>
<dbReference type="FunFam" id="1.10.472.10:FF:000013">
    <property type="entry name" value="Cyclin A1"/>
    <property type="match status" value="1"/>
</dbReference>
<dbReference type="FunFam" id="1.10.472.10:FF:000167">
    <property type="entry name" value="Mitotic cyclin 6"/>
    <property type="match status" value="1"/>
</dbReference>
<dbReference type="Gene3D" id="1.10.472.10">
    <property type="entry name" value="Cyclin-like"/>
    <property type="match status" value="2"/>
</dbReference>
<dbReference type="InterPro" id="IPR039361">
    <property type="entry name" value="Cyclin"/>
</dbReference>
<dbReference type="InterPro" id="IPR013763">
    <property type="entry name" value="Cyclin-like_dom"/>
</dbReference>
<dbReference type="InterPro" id="IPR036915">
    <property type="entry name" value="Cyclin-like_sf"/>
</dbReference>
<dbReference type="InterPro" id="IPR046965">
    <property type="entry name" value="Cyclin_A/B-like"/>
</dbReference>
<dbReference type="InterPro" id="IPR004367">
    <property type="entry name" value="Cyclin_C-dom"/>
</dbReference>
<dbReference type="InterPro" id="IPR006671">
    <property type="entry name" value="Cyclin_N"/>
</dbReference>
<dbReference type="InterPro" id="IPR048258">
    <property type="entry name" value="Cyclins_cyclin-box"/>
</dbReference>
<dbReference type="PANTHER" id="PTHR10177">
    <property type="entry name" value="CYCLINS"/>
    <property type="match status" value="1"/>
</dbReference>
<dbReference type="Pfam" id="PF02984">
    <property type="entry name" value="Cyclin_C"/>
    <property type="match status" value="1"/>
</dbReference>
<dbReference type="Pfam" id="PF00134">
    <property type="entry name" value="Cyclin_N"/>
    <property type="match status" value="1"/>
</dbReference>
<dbReference type="PIRSF" id="PIRSF001771">
    <property type="entry name" value="Cyclin_A_B_D_E"/>
    <property type="match status" value="1"/>
</dbReference>
<dbReference type="SMART" id="SM00385">
    <property type="entry name" value="CYCLIN"/>
    <property type="match status" value="2"/>
</dbReference>
<dbReference type="SMART" id="SM01332">
    <property type="entry name" value="Cyclin_C"/>
    <property type="match status" value="1"/>
</dbReference>
<dbReference type="SUPFAM" id="SSF47954">
    <property type="entry name" value="Cyclin-like"/>
    <property type="match status" value="2"/>
</dbReference>
<dbReference type="PROSITE" id="PS00292">
    <property type="entry name" value="CYCLINS"/>
    <property type="match status" value="1"/>
</dbReference>